<accession>C7DQC2</accession>
<sequence length="70" mass="8086">MMFRLTSVSCFLLFIVFLNLVVLTNACIPEGTYCQFNADCCLSQCCWGSCGNPCRFPGKREKLQEFFRQR</sequence>
<protein>
    <recommendedName>
        <fullName evidence="3">Conotoxin Lt11.2</fullName>
    </recommendedName>
</protein>
<proteinExistence type="inferred from homology"/>
<keyword id="KW-0027">Amidation</keyword>
<keyword id="KW-0165">Cleavage on pair of basic residues</keyword>
<keyword id="KW-1015">Disulfide bond</keyword>
<keyword id="KW-0964">Secreted</keyword>
<keyword id="KW-0732">Signal</keyword>
<keyword id="KW-0800">Toxin</keyword>
<dbReference type="EMBL" id="GQ180870">
    <property type="protein sequence ID" value="ACU30732.1"/>
    <property type="molecule type" value="mRNA"/>
</dbReference>
<dbReference type="SMR" id="C7DQC2"/>
<dbReference type="GO" id="GO:0005576">
    <property type="term" value="C:extracellular region"/>
    <property type="evidence" value="ECO:0007669"/>
    <property type="project" value="UniProtKB-SubCell"/>
</dbReference>
<dbReference type="GO" id="GO:0090729">
    <property type="term" value="F:toxin activity"/>
    <property type="evidence" value="ECO:0007669"/>
    <property type="project" value="UniProtKB-KW"/>
</dbReference>
<dbReference type="InterPro" id="IPR013141">
    <property type="entry name" value="Conotoxin-I_CS"/>
</dbReference>
<dbReference type="InterPro" id="IPR020242">
    <property type="entry name" value="Conotoxin_I2"/>
</dbReference>
<dbReference type="Pfam" id="PF17557">
    <property type="entry name" value="Conotoxin_I2"/>
    <property type="match status" value="1"/>
</dbReference>
<dbReference type="PROSITE" id="PS60019">
    <property type="entry name" value="I_CONOTOXIN"/>
    <property type="match status" value="1"/>
</dbReference>
<comment type="subcellular location">
    <subcellularLocation>
        <location evidence="5">Secreted</location>
    </subcellularLocation>
</comment>
<comment type="tissue specificity">
    <text evidence="5">Expressed by the venom duct.</text>
</comment>
<comment type="domain">
    <text evidence="4">The cysteine framework is XI (C-C-CC-CC-C-C).</text>
</comment>
<comment type="similarity">
    <text evidence="4">Belongs to the conotoxin I2 superfamily.</text>
</comment>
<organism>
    <name type="scientific">Conus litteratus</name>
    <name type="common">Lettered cone</name>
    <dbReference type="NCBI Taxonomy" id="89445"/>
    <lineage>
        <taxon>Eukaryota</taxon>
        <taxon>Metazoa</taxon>
        <taxon>Spiralia</taxon>
        <taxon>Lophotrochozoa</taxon>
        <taxon>Mollusca</taxon>
        <taxon>Gastropoda</taxon>
        <taxon>Caenogastropoda</taxon>
        <taxon>Neogastropoda</taxon>
        <taxon>Conoidea</taxon>
        <taxon>Conidae</taxon>
        <taxon>Conus</taxon>
        <taxon>Elisaconus</taxon>
    </lineage>
</organism>
<name>I2B2_CONLT</name>
<feature type="signal peptide" evidence="1">
    <location>
        <begin position="1"/>
        <end position="26"/>
    </location>
</feature>
<feature type="peptide" id="PRO_0000392035" description="Conotoxin Lt11.2">
    <location>
        <begin position="27"/>
        <end position="57"/>
    </location>
</feature>
<feature type="propeptide" id="PRO_0000392036" evidence="1">
    <location>
        <begin position="61"/>
        <end position="70"/>
    </location>
</feature>
<feature type="modified residue" description="Proline amide" evidence="1">
    <location>
        <position position="57"/>
    </location>
</feature>
<feature type="disulfide bond" evidence="2">
    <location>
        <begin position="27"/>
        <end position="41"/>
    </location>
</feature>
<feature type="disulfide bond" evidence="2">
    <location>
        <begin position="34"/>
        <end position="46"/>
    </location>
</feature>
<feature type="disulfide bond" evidence="2">
    <location>
        <begin position="40"/>
        <end position="50"/>
    </location>
</feature>
<feature type="disulfide bond" evidence="2">
    <location>
        <begin position="45"/>
        <end position="54"/>
    </location>
</feature>
<evidence type="ECO:0000250" key="1"/>
<evidence type="ECO:0000250" key="2">
    <source>
        <dbReference type="UniProtKB" id="Q7Z094"/>
    </source>
</evidence>
<evidence type="ECO:0000303" key="3">
    <source>
    </source>
</evidence>
<evidence type="ECO:0000305" key="4"/>
<evidence type="ECO:0000305" key="5">
    <source>
    </source>
</evidence>
<reference key="1">
    <citation type="journal article" date="2009" name="Peptides">
        <title>Identification of novel I-superfamily conopeptides from several clades of Conus species found in the South China Sea.</title>
        <authorList>
            <person name="Liu Z."/>
            <person name="Xu N."/>
            <person name="Hu J."/>
            <person name="Zhao C."/>
            <person name="Yu Z."/>
            <person name="Dai Q."/>
        </authorList>
    </citation>
    <scope>NUCLEOTIDE SEQUENCE [MRNA]</scope>
    <source>
        <tissue>Venom duct</tissue>
    </source>
</reference>